<protein>
    <recommendedName>
        <fullName evidence="1">Large ribosomal subunit protein uL29</fullName>
    </recommendedName>
    <alternativeName>
        <fullName evidence="2">50S ribosomal protein L29</fullName>
    </alternativeName>
</protein>
<dbReference type="EMBL" id="CP000127">
    <property type="protein sequence ID" value="ABA58774.1"/>
    <property type="molecule type" value="Genomic_DNA"/>
</dbReference>
<dbReference type="SMR" id="Q3J8S2"/>
<dbReference type="FunCoup" id="Q3J8S2">
    <property type="interactions" value="454"/>
</dbReference>
<dbReference type="STRING" id="323261.Noc_2316"/>
<dbReference type="KEGG" id="noc:Noc_2316"/>
<dbReference type="eggNOG" id="COG0255">
    <property type="taxonomic scope" value="Bacteria"/>
</dbReference>
<dbReference type="HOGENOM" id="CLU_158491_1_2_6"/>
<dbReference type="InParanoid" id="Q3J8S2"/>
<dbReference type="Proteomes" id="UP000006838">
    <property type="component" value="Chromosome"/>
</dbReference>
<dbReference type="GO" id="GO:0022625">
    <property type="term" value="C:cytosolic large ribosomal subunit"/>
    <property type="evidence" value="ECO:0007669"/>
    <property type="project" value="TreeGrafter"/>
</dbReference>
<dbReference type="GO" id="GO:0003735">
    <property type="term" value="F:structural constituent of ribosome"/>
    <property type="evidence" value="ECO:0007669"/>
    <property type="project" value="InterPro"/>
</dbReference>
<dbReference type="GO" id="GO:0006412">
    <property type="term" value="P:translation"/>
    <property type="evidence" value="ECO:0007669"/>
    <property type="project" value="UniProtKB-UniRule"/>
</dbReference>
<dbReference type="CDD" id="cd00427">
    <property type="entry name" value="Ribosomal_L29_HIP"/>
    <property type="match status" value="1"/>
</dbReference>
<dbReference type="FunFam" id="1.10.287.310:FF:000001">
    <property type="entry name" value="50S ribosomal protein L29"/>
    <property type="match status" value="1"/>
</dbReference>
<dbReference type="Gene3D" id="1.10.287.310">
    <property type="match status" value="1"/>
</dbReference>
<dbReference type="HAMAP" id="MF_00374">
    <property type="entry name" value="Ribosomal_uL29"/>
    <property type="match status" value="1"/>
</dbReference>
<dbReference type="InterPro" id="IPR050063">
    <property type="entry name" value="Ribosomal_protein_uL29"/>
</dbReference>
<dbReference type="InterPro" id="IPR001854">
    <property type="entry name" value="Ribosomal_uL29"/>
</dbReference>
<dbReference type="InterPro" id="IPR036049">
    <property type="entry name" value="Ribosomal_uL29_sf"/>
</dbReference>
<dbReference type="NCBIfam" id="TIGR00012">
    <property type="entry name" value="L29"/>
    <property type="match status" value="1"/>
</dbReference>
<dbReference type="PANTHER" id="PTHR10916">
    <property type="entry name" value="60S RIBOSOMAL PROTEIN L35/50S RIBOSOMAL PROTEIN L29"/>
    <property type="match status" value="1"/>
</dbReference>
<dbReference type="PANTHER" id="PTHR10916:SF0">
    <property type="entry name" value="LARGE RIBOSOMAL SUBUNIT PROTEIN UL29C"/>
    <property type="match status" value="1"/>
</dbReference>
<dbReference type="Pfam" id="PF00831">
    <property type="entry name" value="Ribosomal_L29"/>
    <property type="match status" value="1"/>
</dbReference>
<dbReference type="SUPFAM" id="SSF46561">
    <property type="entry name" value="Ribosomal protein L29 (L29p)"/>
    <property type="match status" value="1"/>
</dbReference>
<accession>Q3J8S2</accession>
<organism>
    <name type="scientific">Nitrosococcus oceani (strain ATCC 19707 / BCRC 17464 / JCM 30415 / NCIMB 11848 / C-107)</name>
    <dbReference type="NCBI Taxonomy" id="323261"/>
    <lineage>
        <taxon>Bacteria</taxon>
        <taxon>Pseudomonadati</taxon>
        <taxon>Pseudomonadota</taxon>
        <taxon>Gammaproteobacteria</taxon>
        <taxon>Chromatiales</taxon>
        <taxon>Chromatiaceae</taxon>
        <taxon>Nitrosococcus</taxon>
    </lineage>
</organism>
<feature type="chain" id="PRO_1000072145" description="Large ribosomal subunit protein uL29">
    <location>
        <begin position="1"/>
        <end position="66"/>
    </location>
</feature>
<gene>
    <name evidence="1" type="primary">rpmC</name>
    <name type="ordered locus">Noc_2316</name>
</gene>
<reference key="1">
    <citation type="journal article" date="2006" name="Appl. Environ. Microbiol.">
        <title>Complete genome sequence of the marine, chemolithoautotrophic, ammonia-oxidizing bacterium Nitrosococcus oceani ATCC 19707.</title>
        <authorList>
            <person name="Klotz M.G."/>
            <person name="Arp D.J."/>
            <person name="Chain P.S.G."/>
            <person name="El-Sheikh A.F."/>
            <person name="Hauser L.J."/>
            <person name="Hommes N.G."/>
            <person name="Larimer F.W."/>
            <person name="Malfatti S.A."/>
            <person name="Norton J.M."/>
            <person name="Poret-Peterson A.T."/>
            <person name="Vergez L.M."/>
            <person name="Ward B.B."/>
        </authorList>
    </citation>
    <scope>NUCLEOTIDE SEQUENCE [LARGE SCALE GENOMIC DNA]</scope>
    <source>
        <strain>ATCC 19707 / BCRC 17464 / JCM 30415 / NCIMB 11848 / C-107</strain>
    </source>
</reference>
<sequence length="66" mass="7958">MMKVQELRTKTEDELRKELLELSRERFKLRMQMGTGQLVRNSELKRVRRSIARVKTVLTEKQQQAQ</sequence>
<keyword id="KW-1185">Reference proteome</keyword>
<keyword id="KW-0687">Ribonucleoprotein</keyword>
<keyword id="KW-0689">Ribosomal protein</keyword>
<proteinExistence type="inferred from homology"/>
<name>RL29_NITOC</name>
<evidence type="ECO:0000255" key="1">
    <source>
        <dbReference type="HAMAP-Rule" id="MF_00374"/>
    </source>
</evidence>
<evidence type="ECO:0000305" key="2"/>
<comment type="similarity">
    <text evidence="1">Belongs to the universal ribosomal protein uL29 family.</text>
</comment>